<name>YCF60_PYRYE</name>
<dbReference type="EMBL" id="AP006715">
    <property type="protein sequence ID" value="BAE92484.1"/>
    <property type="molecule type" value="Genomic_DNA"/>
</dbReference>
<dbReference type="RefSeq" id="YP_537041.1">
    <property type="nucleotide sequence ID" value="NC_007932.1"/>
</dbReference>
<dbReference type="SMR" id="Q1XDC7"/>
<dbReference type="GO" id="GO:0031969">
    <property type="term" value="C:chloroplast membrane"/>
    <property type="evidence" value="ECO:0007669"/>
    <property type="project" value="UniProtKB-SubCell"/>
</dbReference>
<dbReference type="InterPro" id="IPR005691">
    <property type="entry name" value="Tic20"/>
</dbReference>
<dbReference type="PANTHER" id="PTHR33510">
    <property type="entry name" value="PROTEIN TIC 20-II, CHLOROPLASTIC"/>
    <property type="match status" value="1"/>
</dbReference>
<dbReference type="PANTHER" id="PTHR33510:SF5">
    <property type="entry name" value="PROTEIN TIC 20-II, CHLOROPLASTIC"/>
    <property type="match status" value="1"/>
</dbReference>
<dbReference type="Pfam" id="PF16166">
    <property type="entry name" value="TIC20"/>
    <property type="match status" value="1"/>
</dbReference>
<accession>Q1XDC7</accession>
<organism>
    <name type="scientific">Pyropia yezoensis</name>
    <name type="common">Susabi-nori</name>
    <name type="synonym">Porphyra yezoensis</name>
    <dbReference type="NCBI Taxonomy" id="2788"/>
    <lineage>
        <taxon>Eukaryota</taxon>
        <taxon>Rhodophyta</taxon>
        <taxon>Bangiophyceae</taxon>
        <taxon>Bangiales</taxon>
        <taxon>Bangiaceae</taxon>
        <taxon>Pyropia</taxon>
    </lineage>
</organism>
<sequence length="203" mass="23376">MIRLFTFAIITVFLIVISRLALQRAYKYIKLNKKINNTESKTRLSIRLVSTVPYYLPLFEGLQNFGQYVLPDYPVAAIPLYKKIILPMLIFYMNHAILGLVTFFALYYVLVRNKSPIPVHQLVRFNSMQSILLFLVGSLFGAVFRAFPIEFRISFLGLMVCNMMFWFVLSTITYSIVKAVQGKYSNIPVISEAVRIQISGYST</sequence>
<proteinExistence type="inferred from homology"/>
<protein>
    <recommendedName>
        <fullName>Tic20 family protein Ycf60</fullName>
    </recommendedName>
</protein>
<feature type="chain" id="PRO_0000277374" description="Tic20 family protein Ycf60">
    <location>
        <begin position="1"/>
        <end position="203"/>
    </location>
</feature>
<feature type="transmembrane region" description="Helical" evidence="1">
    <location>
        <begin position="2"/>
        <end position="22"/>
    </location>
</feature>
<feature type="transmembrane region" description="Helical" evidence="1">
    <location>
        <begin position="51"/>
        <end position="71"/>
    </location>
</feature>
<feature type="transmembrane region" description="Helical" evidence="1">
    <location>
        <begin position="84"/>
        <end position="104"/>
    </location>
</feature>
<feature type="transmembrane region" description="Helical" evidence="1">
    <location>
        <begin position="131"/>
        <end position="151"/>
    </location>
</feature>
<feature type="transmembrane region" description="Helical" evidence="1">
    <location>
        <begin position="153"/>
        <end position="173"/>
    </location>
</feature>
<gene>
    <name type="primary">ycf60</name>
</gene>
<keyword id="KW-0150">Chloroplast</keyword>
<keyword id="KW-0472">Membrane</keyword>
<keyword id="KW-0934">Plastid</keyword>
<keyword id="KW-0812">Transmembrane</keyword>
<keyword id="KW-1133">Transmembrane helix</keyword>
<geneLocation type="chloroplast"/>
<comment type="subcellular location">
    <subcellularLocation>
        <location evidence="2">Plastid</location>
        <location evidence="2">Chloroplast membrane</location>
        <topology evidence="2">Multi-pass membrane protein</topology>
    </subcellularLocation>
</comment>
<comment type="similarity">
    <text evidence="2">Belongs to the Tic20 family.</text>
</comment>
<reference key="1">
    <citation type="submission" date="2003-11" db="EMBL/GenBank/DDBJ databases">
        <title>Whole genome sequence of Porphyra yezoensis chloroplast.</title>
        <authorList>
            <person name="Kunimoto M."/>
            <person name="Morishima K."/>
            <person name="Yoshikawa M."/>
            <person name="Fukuda S."/>
            <person name="Kobayashi T."/>
            <person name="Kobayashi M."/>
            <person name="Okazaki T."/>
            <person name="Ohara I."/>
            <person name="Nakayama I."/>
        </authorList>
    </citation>
    <scope>NUCLEOTIDE SEQUENCE [LARGE SCALE GENOMIC DNA]</scope>
    <source>
        <strain>U-51</strain>
    </source>
</reference>
<evidence type="ECO:0000255" key="1"/>
<evidence type="ECO:0000305" key="2"/>